<name>CITX_ECOSM</name>
<proteinExistence type="inferred from homology"/>
<organism>
    <name type="scientific">Escherichia coli (strain SMS-3-5 / SECEC)</name>
    <dbReference type="NCBI Taxonomy" id="439855"/>
    <lineage>
        <taxon>Bacteria</taxon>
        <taxon>Pseudomonadati</taxon>
        <taxon>Pseudomonadota</taxon>
        <taxon>Gammaproteobacteria</taxon>
        <taxon>Enterobacterales</taxon>
        <taxon>Enterobacteriaceae</taxon>
        <taxon>Escherichia</taxon>
    </lineage>
</organism>
<evidence type="ECO:0000255" key="1">
    <source>
        <dbReference type="HAMAP-Rule" id="MF_00398"/>
    </source>
</evidence>
<reference key="1">
    <citation type="journal article" date="2008" name="J. Bacteriol.">
        <title>Insights into the environmental resistance gene pool from the genome sequence of the multidrug-resistant environmental isolate Escherichia coli SMS-3-5.</title>
        <authorList>
            <person name="Fricke W.F."/>
            <person name="Wright M.S."/>
            <person name="Lindell A.H."/>
            <person name="Harkins D.M."/>
            <person name="Baker-Austin C."/>
            <person name="Ravel J."/>
            <person name="Stepanauskas R."/>
        </authorList>
    </citation>
    <scope>NUCLEOTIDE SEQUENCE [LARGE SCALE GENOMIC DNA]</scope>
    <source>
        <strain>SMS-3-5 / SECEC</strain>
    </source>
</reference>
<protein>
    <recommendedName>
        <fullName>Apo-citrate lyase phosphoribosyl-dephospho-CoA transferase</fullName>
        <ecNumber evidence="1">2.7.7.61</ecNumber>
    </recommendedName>
    <alternativeName>
        <fullName evidence="1">Apo-ACP nucleodityltransferase</fullName>
    </alternativeName>
    <alternativeName>
        <fullName evidence="1">Holo-ACP synthase</fullName>
    </alternativeName>
    <alternativeName>
        <fullName evidence="1">Holo-citrate lyase synthase</fullName>
    </alternativeName>
</protein>
<sequence>MHLLPELASHHAVSIPELLVSRDERQARQHVWLKRHPVPLVSFTVVAPGPIKDSEVTRRIFNHGVTALRALAAKQGWQIQEQAALVSASGPEGMLSIAAPARDLKLATIELEHSHPLGRLWDIDVLTPEGDILSRRDYSLPPRRCLLCEQSAAVCARGKTHQLTDLLNRMEALLNDVDACNVN</sequence>
<dbReference type="EC" id="2.7.7.61" evidence="1"/>
<dbReference type="EMBL" id="CP000970">
    <property type="protein sequence ID" value="ACB19152.1"/>
    <property type="molecule type" value="Genomic_DNA"/>
</dbReference>
<dbReference type="RefSeq" id="WP_000550418.1">
    <property type="nucleotide sequence ID" value="NC_010498.1"/>
</dbReference>
<dbReference type="SMR" id="B1LKK6"/>
<dbReference type="KEGG" id="ecm:EcSMS35_0633"/>
<dbReference type="HOGENOM" id="CLU_104529_1_1_6"/>
<dbReference type="Proteomes" id="UP000007011">
    <property type="component" value="Chromosome"/>
</dbReference>
<dbReference type="GO" id="GO:0050519">
    <property type="term" value="F:holo-citrate lyase synthase activity"/>
    <property type="evidence" value="ECO:0007669"/>
    <property type="project" value="UniProtKB-UniRule"/>
</dbReference>
<dbReference type="GO" id="GO:0051191">
    <property type="term" value="P:prosthetic group biosynthetic process"/>
    <property type="evidence" value="ECO:0007669"/>
    <property type="project" value="InterPro"/>
</dbReference>
<dbReference type="HAMAP" id="MF_00398">
    <property type="entry name" value="CitX"/>
    <property type="match status" value="1"/>
</dbReference>
<dbReference type="InterPro" id="IPR005551">
    <property type="entry name" value="CitX"/>
</dbReference>
<dbReference type="NCBIfam" id="TIGR03124">
    <property type="entry name" value="citrate_citX"/>
    <property type="match status" value="1"/>
</dbReference>
<dbReference type="NCBIfam" id="NF002383">
    <property type="entry name" value="PRK01392.1"/>
    <property type="match status" value="1"/>
</dbReference>
<dbReference type="Pfam" id="PF03802">
    <property type="entry name" value="CitX"/>
    <property type="match status" value="1"/>
</dbReference>
<accession>B1LKK6</accession>
<comment type="function">
    <text evidence="1">Transfers 2-(5''-triphosphoribosyl)-3'-dephosphocoenzyme-A on a serine residue to the apo-acyl carrier protein (gamma chain) of the citrate lyase to yield holo-acyl carrier protein.</text>
</comment>
<comment type="catalytic activity">
    <reaction evidence="1">
        <text>apo-[citrate lyase ACP] + 2'-(5''-triphospho-alpha-D-ribosyl)-3'-dephospho-CoA = holo-[citrate lyase ACP] + diphosphate</text>
        <dbReference type="Rhea" id="RHEA:16333"/>
        <dbReference type="Rhea" id="RHEA-COMP:10157"/>
        <dbReference type="Rhea" id="RHEA-COMP:10158"/>
        <dbReference type="ChEBI" id="CHEBI:29999"/>
        <dbReference type="ChEBI" id="CHEBI:33019"/>
        <dbReference type="ChEBI" id="CHEBI:61378"/>
        <dbReference type="ChEBI" id="CHEBI:82683"/>
        <dbReference type="EC" id="2.7.7.61"/>
    </reaction>
</comment>
<comment type="similarity">
    <text evidence="1">Belongs to the CitX family.</text>
</comment>
<gene>
    <name evidence="1" type="primary">citX</name>
    <name type="ordered locus">EcSMS35_0633</name>
</gene>
<keyword id="KW-0548">Nucleotidyltransferase</keyword>
<keyword id="KW-0808">Transferase</keyword>
<feature type="chain" id="PRO_1000189600" description="Apo-citrate lyase phosphoribosyl-dephospho-CoA transferase">
    <location>
        <begin position="1"/>
        <end position="183"/>
    </location>
</feature>